<name>A1I1_LOXSP</name>
<organism>
    <name type="scientific">Loxosceles spadicea</name>
    <name type="common">Recluse spider</name>
    <dbReference type="NCBI Taxonomy" id="571530"/>
    <lineage>
        <taxon>Eukaryota</taxon>
        <taxon>Metazoa</taxon>
        <taxon>Ecdysozoa</taxon>
        <taxon>Arthropoda</taxon>
        <taxon>Chelicerata</taxon>
        <taxon>Arachnida</taxon>
        <taxon>Araneae</taxon>
        <taxon>Araneomorphae</taxon>
        <taxon>Haplogynae</taxon>
        <taxon>Scytodoidea</taxon>
        <taxon>Sicariidae</taxon>
        <taxon>Loxosceles</taxon>
    </lineage>
</organism>
<proteinExistence type="evidence at transcript level"/>
<evidence type="ECO:0000250" key="1">
    <source>
        <dbReference type="UniProtKB" id="A0A0D4WTV1"/>
    </source>
</evidence>
<evidence type="ECO:0000250" key="2">
    <source>
        <dbReference type="UniProtKB" id="A0A0D4WV12"/>
    </source>
</evidence>
<evidence type="ECO:0000250" key="3">
    <source>
        <dbReference type="UniProtKB" id="P0CE80"/>
    </source>
</evidence>
<evidence type="ECO:0000250" key="4">
    <source>
        <dbReference type="UniProtKB" id="Q4ZFU2"/>
    </source>
</evidence>
<evidence type="ECO:0000250" key="5">
    <source>
        <dbReference type="UniProtKB" id="Q8I914"/>
    </source>
</evidence>
<evidence type="ECO:0000303" key="6">
    <source>
    </source>
</evidence>
<evidence type="ECO:0000305" key="7"/>
<evidence type="ECO:0000305" key="8">
    <source>
    </source>
</evidence>
<feature type="chain" id="PRO_0000392743" description="Dermonecrotic toxin LspaSicTox-alphaIA2i">
    <location>
        <begin position="1" status="less than"/>
        <end position="273"/>
    </location>
</feature>
<feature type="active site" evidence="5">
    <location>
        <position position="5"/>
    </location>
</feature>
<feature type="active site" description="Nucleophile" evidence="5">
    <location>
        <position position="41"/>
    </location>
</feature>
<feature type="binding site" evidence="5">
    <location>
        <position position="25"/>
    </location>
    <ligand>
        <name>Mg(2+)</name>
        <dbReference type="ChEBI" id="CHEBI:18420"/>
    </ligand>
</feature>
<feature type="binding site" evidence="5">
    <location>
        <position position="27"/>
    </location>
    <ligand>
        <name>Mg(2+)</name>
        <dbReference type="ChEBI" id="CHEBI:18420"/>
    </ligand>
</feature>
<feature type="binding site" evidence="5">
    <location>
        <position position="85"/>
    </location>
    <ligand>
        <name>Mg(2+)</name>
        <dbReference type="ChEBI" id="CHEBI:18420"/>
    </ligand>
</feature>
<feature type="disulfide bond" evidence="3">
    <location>
        <begin position="45"/>
        <end position="51"/>
    </location>
</feature>
<feature type="disulfide bond" evidence="3">
    <location>
        <begin position="47"/>
        <end position="190"/>
    </location>
</feature>
<feature type="non-terminal residue">
    <location>
        <position position="1"/>
    </location>
</feature>
<keyword id="KW-0204">Cytolysis</keyword>
<keyword id="KW-1061">Dermonecrotic toxin</keyword>
<keyword id="KW-1015">Disulfide bond</keyword>
<keyword id="KW-0354">Hemolysis</keyword>
<keyword id="KW-0442">Lipid degradation</keyword>
<keyword id="KW-0443">Lipid metabolism</keyword>
<keyword id="KW-0456">Lyase</keyword>
<keyword id="KW-0460">Magnesium</keyword>
<keyword id="KW-0479">Metal-binding</keyword>
<keyword id="KW-0964">Secreted</keyword>
<keyword id="KW-0800">Toxin</keyword>
<sequence>WIMGHMVNAIGQIDEFVNLGANSIETDVSFDDSANPQYTYHGVPCDCGRSCLKWENYNDFLKGLRSATTPGNSKYQSKLVLVVFDLKTGSLYDNQANEAGKKLAKNLLQHYWNNGNNGGRAYIVLSIPDLNHYPLIKGFTDTLTQEGHPELLEKVGYDFSGNDAIGDVANAYKKAGVTGHVWQSDGITNCLLRGLTRVREAVANRDSGKGYINKVYYWTVDKRASTRDALDAGVDGVMTNYPDVITDVMNEAAYKNKFRLATYEDNPWETFKK</sequence>
<accession>C0JAS6</accession>
<accession>C0JAS5</accession>
<dbReference type="EC" id="4.6.1.-" evidence="4"/>
<dbReference type="EMBL" id="FJ171360">
    <property type="protein sequence ID" value="ACN48856.1"/>
    <property type="molecule type" value="mRNA"/>
</dbReference>
<dbReference type="EMBL" id="FJ171361">
    <property type="protein sequence ID" value="ACN48857.1"/>
    <property type="molecule type" value="mRNA"/>
</dbReference>
<dbReference type="SMR" id="C0JAS6"/>
<dbReference type="GO" id="GO:0005576">
    <property type="term" value="C:extracellular region"/>
    <property type="evidence" value="ECO:0007669"/>
    <property type="project" value="UniProtKB-SubCell"/>
</dbReference>
<dbReference type="GO" id="GO:0016829">
    <property type="term" value="F:lyase activity"/>
    <property type="evidence" value="ECO:0007669"/>
    <property type="project" value="UniProtKB-KW"/>
</dbReference>
<dbReference type="GO" id="GO:0046872">
    <property type="term" value="F:metal ion binding"/>
    <property type="evidence" value="ECO:0007669"/>
    <property type="project" value="UniProtKB-KW"/>
</dbReference>
<dbReference type="GO" id="GO:0008081">
    <property type="term" value="F:phosphoric diester hydrolase activity"/>
    <property type="evidence" value="ECO:0007669"/>
    <property type="project" value="InterPro"/>
</dbReference>
<dbReference type="GO" id="GO:0090729">
    <property type="term" value="F:toxin activity"/>
    <property type="evidence" value="ECO:0007669"/>
    <property type="project" value="UniProtKB-KW"/>
</dbReference>
<dbReference type="GO" id="GO:0031640">
    <property type="term" value="P:killing of cells of another organism"/>
    <property type="evidence" value="ECO:0007669"/>
    <property type="project" value="UniProtKB-KW"/>
</dbReference>
<dbReference type="GO" id="GO:0016042">
    <property type="term" value="P:lipid catabolic process"/>
    <property type="evidence" value="ECO:0007669"/>
    <property type="project" value="UniProtKB-KW"/>
</dbReference>
<dbReference type="CDD" id="cd08576">
    <property type="entry name" value="GDPD_like_SMaseD_PLD"/>
    <property type="match status" value="1"/>
</dbReference>
<dbReference type="Gene3D" id="3.20.20.190">
    <property type="entry name" value="Phosphatidylinositol (PI) phosphodiesterase"/>
    <property type="match status" value="1"/>
</dbReference>
<dbReference type="InterPro" id="IPR017946">
    <property type="entry name" value="PLC-like_Pdiesterase_TIM-brl"/>
</dbReference>
<dbReference type="Pfam" id="PF13653">
    <property type="entry name" value="GDPD_2"/>
    <property type="match status" value="1"/>
</dbReference>
<dbReference type="SUPFAM" id="SSF51695">
    <property type="entry name" value="PLC-like phosphodiesterases"/>
    <property type="match status" value="1"/>
</dbReference>
<protein>
    <recommendedName>
        <fullName evidence="6">Dermonecrotic toxin LspaSicTox-alphaIA2i</fullName>
        <ecNumber evidence="4">4.6.1.-</ecNumber>
    </recommendedName>
    <alternativeName>
        <fullName>Phospholipase D</fullName>
        <shortName>PLD</shortName>
    </alternativeName>
    <alternativeName>
        <fullName>Sphingomyelin phosphodiesterase D</fullName>
        <shortName>SMD</shortName>
        <shortName>SMase D</shortName>
        <shortName>Sphingomyelinase D</shortName>
    </alternativeName>
</protein>
<comment type="function">
    <text evidence="1 3">Dermonecrotic toxins cleave the phosphodiester linkage between the phosphate and headgroup of certain phospholipids (sphingolipid and lysolipid substrates), forming an alcohol (often choline) and a cyclic phosphate (By similarity). This toxin acts on sphingomyelin (SM) (By similarity). It may also act on ceramide phosphoethanolamine (CPE), lysophosphatidylcholine (LPC) and lysophosphatidylethanolamine (LPE), but not on lysophosphatidylserine (LPS), and lysophosphatidylglycerol (LPG) (By similarity). It acts by transphosphatidylation, releasing exclusively cyclic phosphate products as second products (By similarity). Induces dermonecrosis, hemolysis, increased vascular permeability, edema, inflammatory response, and platelet aggregation (By similarity).</text>
</comment>
<comment type="catalytic activity">
    <reaction evidence="1">
        <text>an N-(acyl)-sphingosylphosphocholine = an N-(acyl)-sphingosyl-1,3-cyclic phosphate + choline</text>
        <dbReference type="Rhea" id="RHEA:60652"/>
        <dbReference type="ChEBI" id="CHEBI:15354"/>
        <dbReference type="ChEBI" id="CHEBI:64583"/>
        <dbReference type="ChEBI" id="CHEBI:143892"/>
    </reaction>
</comment>
<comment type="catalytic activity">
    <reaction evidence="1">
        <text>an N-(acyl)-sphingosylphosphoethanolamine = an N-(acyl)-sphingosyl-1,3-cyclic phosphate + ethanolamine</text>
        <dbReference type="Rhea" id="RHEA:60648"/>
        <dbReference type="ChEBI" id="CHEBI:57603"/>
        <dbReference type="ChEBI" id="CHEBI:143891"/>
        <dbReference type="ChEBI" id="CHEBI:143892"/>
    </reaction>
</comment>
<comment type="catalytic activity">
    <reaction evidence="1">
        <text>a 1-acyl-sn-glycero-3-phosphocholine = a 1-acyl-sn-glycero-2,3-cyclic phosphate + choline</text>
        <dbReference type="Rhea" id="RHEA:60700"/>
        <dbReference type="ChEBI" id="CHEBI:15354"/>
        <dbReference type="ChEBI" id="CHEBI:58168"/>
        <dbReference type="ChEBI" id="CHEBI:143947"/>
    </reaction>
</comment>
<comment type="catalytic activity">
    <reaction evidence="1">
        <text>a 1-acyl-sn-glycero-3-phosphoethanolamine = a 1-acyl-sn-glycero-2,3-cyclic phosphate + ethanolamine</text>
        <dbReference type="Rhea" id="RHEA:60704"/>
        <dbReference type="ChEBI" id="CHEBI:57603"/>
        <dbReference type="ChEBI" id="CHEBI:64381"/>
        <dbReference type="ChEBI" id="CHEBI:143947"/>
    </reaction>
</comment>
<comment type="cofactor">
    <cofactor evidence="5">
        <name>Mg(2+)</name>
        <dbReference type="ChEBI" id="CHEBI:18420"/>
    </cofactor>
    <text evidence="5">Binds 1 Mg(2+) ion per subunit.</text>
</comment>
<comment type="subcellular location">
    <subcellularLocation>
        <location evidence="8">Secreted</location>
    </subcellularLocation>
</comment>
<comment type="tissue specificity">
    <text evidence="8">Expressed by the venom gland.</text>
</comment>
<comment type="similarity">
    <text evidence="7">Belongs to the arthropod phospholipase D family. Class II subfamily.</text>
</comment>
<comment type="caution">
    <text evidence="1 2 4">The most common activity assay for dermonecrotic toxins detects enzymatic activity by monitoring choline release from substrate. Liberation of choline from sphingomyelin (SM) or lysophosphatidylcholine (LPC) is commonly assumed to result from substrate hydrolysis, giving either ceramide-1-phosphate (C1P) or lysophosphatidic acid (LPA), respectively, as a second product. However, two studies from Lajoie and colleagues (2013 and 2015) report the observation of exclusive formation of cyclic phosphate products as second products, resulting from intramolecular transphosphatidylation. Cyclic phosphates have vastly different biological properties from their monoester counterparts, and they may be relevant to the pathology of brown spider envenomation.</text>
</comment>
<reference key="1">
    <citation type="journal article" date="2009" name="Mol. Biol. Evol.">
        <title>Molecular evolution, functional variation, and proposed nomenclature of the gene family that includes sphingomyelinase D in sicariid spider venoms.</title>
        <authorList>
            <person name="Binford G.J."/>
            <person name="Bodner M.R."/>
            <person name="Cordes M.H."/>
            <person name="Baldwin K.L."/>
            <person name="Rynerson M.R."/>
            <person name="Burns S.N."/>
            <person name="Zobel-Thropp P.A."/>
        </authorList>
    </citation>
    <scope>NUCLEOTIDE SEQUENCE [MRNA]</scope>
    <scope>NOMENCLATURE</scope>
    <source>
        <tissue>Venom gland</tissue>
    </source>
</reference>